<protein>
    <recommendedName>
        <fullName evidence="1">5'-deoxynucleotidase YPTS_2685</fullName>
        <ecNumber evidence="1">3.1.3.89</ecNumber>
    </recommendedName>
    <alternativeName>
        <fullName evidence="1">5'-deoxyribonucleotidase</fullName>
    </alternativeName>
    <alternativeName>
        <fullName evidence="1">Nucleoside 5'-monophosphate phosphohydrolase</fullName>
    </alternativeName>
</protein>
<sequence>MSHFFAHLSRLKLINRWPLMRNVRTENVSEHSLQVAFVAHALAIIKNRKFNGNLNAERIALLAMYHDASEVITGDLPTPIKYHNPKIAHEYKKIEKVAQQKLIEMLPKELQHDFRCLLDEHYYSEEEKALVKQADALCAYLKCLEELSAGNNEFIQAKARLEKTLAIRQSPEMDYFMAVFVPSFSLSLDEISLDSLD</sequence>
<accession>B2K824</accession>
<keyword id="KW-0963">Cytoplasm</keyword>
<keyword id="KW-0378">Hydrolase</keyword>
<keyword id="KW-0479">Metal-binding</keyword>
<keyword id="KW-0547">Nucleotide-binding</keyword>
<feature type="chain" id="PRO_1000136980" description="5'-deoxynucleotidase YPTS_2685">
    <location>
        <begin position="1"/>
        <end position="197"/>
    </location>
</feature>
<feature type="domain" description="HD" evidence="2">
    <location>
        <begin position="28"/>
        <end position="140"/>
    </location>
</feature>
<feature type="binding site" evidence="1">
    <location>
        <begin position="16"/>
        <end position="17"/>
    </location>
    <ligand>
        <name>substrate</name>
    </ligand>
</feature>
<feature type="binding site" evidence="1">
    <location>
        <position position="31"/>
    </location>
    <ligand>
        <name>a divalent metal cation</name>
        <dbReference type="ChEBI" id="CHEBI:60240"/>
    </ligand>
</feature>
<feature type="binding site" evidence="1">
    <location>
        <position position="31"/>
    </location>
    <ligand>
        <name>substrate</name>
    </ligand>
</feature>
<feature type="binding site" evidence="1">
    <location>
        <position position="66"/>
    </location>
    <ligand>
        <name>a divalent metal cation</name>
        <dbReference type="ChEBI" id="CHEBI:60240"/>
    </ligand>
</feature>
<feature type="binding site" evidence="1">
    <location>
        <position position="67"/>
    </location>
    <ligand>
        <name>a divalent metal cation</name>
        <dbReference type="ChEBI" id="CHEBI:60240"/>
    </ligand>
</feature>
<feature type="binding site" evidence="1">
    <location>
        <position position="67"/>
    </location>
    <ligand>
        <name>substrate</name>
    </ligand>
</feature>
<feature type="binding site" evidence="1">
    <location>
        <begin position="75"/>
        <end position="78"/>
    </location>
    <ligand>
        <name>substrate</name>
    </ligand>
</feature>
<feature type="binding site" evidence="1">
    <location>
        <position position="135"/>
    </location>
    <ligand>
        <name>a divalent metal cation</name>
        <dbReference type="ChEBI" id="CHEBI:60240"/>
    </ligand>
</feature>
<feature type="binding site" evidence="1">
    <location>
        <position position="135"/>
    </location>
    <ligand>
        <name>substrate</name>
    </ligand>
</feature>
<feature type="site" description="Appears to be important in orienting the phosphate for catalysis" evidence="1">
    <location>
        <position position="16"/>
    </location>
</feature>
<reference key="1">
    <citation type="submission" date="2008-04" db="EMBL/GenBank/DDBJ databases">
        <title>Complete sequence of Yersinia pseudotuberculosis PB1/+.</title>
        <authorList>
            <person name="Copeland A."/>
            <person name="Lucas S."/>
            <person name="Lapidus A."/>
            <person name="Glavina del Rio T."/>
            <person name="Dalin E."/>
            <person name="Tice H."/>
            <person name="Bruce D."/>
            <person name="Goodwin L."/>
            <person name="Pitluck S."/>
            <person name="Munk A.C."/>
            <person name="Brettin T."/>
            <person name="Detter J.C."/>
            <person name="Han C."/>
            <person name="Tapia R."/>
            <person name="Schmutz J."/>
            <person name="Larimer F."/>
            <person name="Land M."/>
            <person name="Hauser L."/>
            <person name="Challacombe J.F."/>
            <person name="Green L."/>
            <person name="Lindler L.E."/>
            <person name="Nikolich M.P."/>
            <person name="Richardson P."/>
        </authorList>
    </citation>
    <scope>NUCLEOTIDE SEQUENCE [LARGE SCALE GENOMIC DNA]</scope>
    <source>
        <strain>PB1/+</strain>
    </source>
</reference>
<comment type="function">
    <text evidence="1">Catalyzes the strictly specific dephosphorylation of 2'-deoxyribonucleoside 5'-monophosphates.</text>
</comment>
<comment type="catalytic activity">
    <reaction evidence="1">
        <text>a 2'-deoxyribonucleoside 5'-phosphate + H2O = a 2'-deoxyribonucleoside + phosphate</text>
        <dbReference type="Rhea" id="RHEA:36167"/>
        <dbReference type="ChEBI" id="CHEBI:15377"/>
        <dbReference type="ChEBI" id="CHEBI:18274"/>
        <dbReference type="ChEBI" id="CHEBI:43474"/>
        <dbReference type="ChEBI" id="CHEBI:65317"/>
        <dbReference type="EC" id="3.1.3.89"/>
    </reaction>
</comment>
<comment type="cofactor">
    <cofactor evidence="1">
        <name>a divalent metal cation</name>
        <dbReference type="ChEBI" id="CHEBI:60240"/>
    </cofactor>
</comment>
<comment type="subunit">
    <text evidence="1">Homodimer.</text>
</comment>
<comment type="subcellular location">
    <subcellularLocation>
        <location evidence="1">Cytoplasm</location>
    </subcellularLocation>
</comment>
<comment type="similarity">
    <text evidence="1">Belongs to the 5DNU family.</text>
</comment>
<proteinExistence type="inferred from homology"/>
<organism>
    <name type="scientific">Yersinia pseudotuberculosis serotype IB (strain PB1/+)</name>
    <dbReference type="NCBI Taxonomy" id="502801"/>
    <lineage>
        <taxon>Bacteria</taxon>
        <taxon>Pseudomonadati</taxon>
        <taxon>Pseudomonadota</taxon>
        <taxon>Gammaproteobacteria</taxon>
        <taxon>Enterobacterales</taxon>
        <taxon>Yersiniaceae</taxon>
        <taxon>Yersinia</taxon>
    </lineage>
</organism>
<name>5DNU_YERPB</name>
<evidence type="ECO:0000255" key="1">
    <source>
        <dbReference type="HAMAP-Rule" id="MF_01100"/>
    </source>
</evidence>
<evidence type="ECO:0000255" key="2">
    <source>
        <dbReference type="PROSITE-ProRule" id="PRU01175"/>
    </source>
</evidence>
<dbReference type="EC" id="3.1.3.89" evidence="1"/>
<dbReference type="EMBL" id="CP001048">
    <property type="protein sequence ID" value="ACC89645.1"/>
    <property type="molecule type" value="Genomic_DNA"/>
</dbReference>
<dbReference type="SMR" id="B2K824"/>
<dbReference type="KEGG" id="ypb:YPTS_2685"/>
<dbReference type="PATRIC" id="fig|502801.10.peg.2106"/>
<dbReference type="GO" id="GO:0005737">
    <property type="term" value="C:cytoplasm"/>
    <property type="evidence" value="ECO:0007669"/>
    <property type="project" value="UniProtKB-SubCell"/>
</dbReference>
<dbReference type="GO" id="GO:0002953">
    <property type="term" value="F:5'-deoxynucleotidase activity"/>
    <property type="evidence" value="ECO:0007669"/>
    <property type="project" value="UniProtKB-EC"/>
</dbReference>
<dbReference type="GO" id="GO:0046872">
    <property type="term" value="F:metal ion binding"/>
    <property type="evidence" value="ECO:0007669"/>
    <property type="project" value="UniProtKB-KW"/>
</dbReference>
<dbReference type="GO" id="GO:0000166">
    <property type="term" value="F:nucleotide binding"/>
    <property type="evidence" value="ECO:0007669"/>
    <property type="project" value="UniProtKB-KW"/>
</dbReference>
<dbReference type="FunFam" id="1.10.3210.10:FF:000002">
    <property type="entry name" value="Nucleotidase YfbR"/>
    <property type="match status" value="1"/>
</dbReference>
<dbReference type="Gene3D" id="1.10.3210.10">
    <property type="entry name" value="Hypothetical protein af1432"/>
    <property type="match status" value="1"/>
</dbReference>
<dbReference type="HAMAP" id="MF_01100">
    <property type="entry name" value="5DNU"/>
    <property type="match status" value="1"/>
</dbReference>
<dbReference type="InterPro" id="IPR003607">
    <property type="entry name" value="HD/PDEase_dom"/>
</dbReference>
<dbReference type="InterPro" id="IPR006674">
    <property type="entry name" value="HD_domain"/>
</dbReference>
<dbReference type="InterPro" id="IPR022971">
    <property type="entry name" value="YfbR"/>
</dbReference>
<dbReference type="InterPro" id="IPR039356">
    <property type="entry name" value="YfbR/HDDC2"/>
</dbReference>
<dbReference type="NCBIfam" id="NF003009">
    <property type="entry name" value="PRK03826.1"/>
    <property type="match status" value="1"/>
</dbReference>
<dbReference type="PANTHER" id="PTHR11845">
    <property type="entry name" value="5'-DEOXYNUCLEOTIDASE HDDC2"/>
    <property type="match status" value="1"/>
</dbReference>
<dbReference type="PANTHER" id="PTHR11845:SF13">
    <property type="entry name" value="5'-DEOXYNUCLEOTIDASE HDDC2"/>
    <property type="match status" value="1"/>
</dbReference>
<dbReference type="Pfam" id="PF12917">
    <property type="entry name" value="YfbR-like"/>
    <property type="match status" value="1"/>
</dbReference>
<dbReference type="SMART" id="SM00471">
    <property type="entry name" value="HDc"/>
    <property type="match status" value="1"/>
</dbReference>
<dbReference type="SUPFAM" id="SSF109604">
    <property type="entry name" value="HD-domain/PDEase-like"/>
    <property type="match status" value="1"/>
</dbReference>
<dbReference type="PROSITE" id="PS51831">
    <property type="entry name" value="HD"/>
    <property type="match status" value="1"/>
</dbReference>
<gene>
    <name type="ordered locus">YPTS_2685</name>
</gene>